<organism>
    <name type="scientific">Thermus thermophilus (strain ATCC 27634 / DSM 579 / HB8)</name>
    <dbReference type="NCBI Taxonomy" id="300852"/>
    <lineage>
        <taxon>Bacteria</taxon>
        <taxon>Thermotogati</taxon>
        <taxon>Deinococcota</taxon>
        <taxon>Deinococci</taxon>
        <taxon>Thermales</taxon>
        <taxon>Thermaceae</taxon>
        <taxon>Thermus</taxon>
    </lineage>
</organism>
<gene>
    <name evidence="1" type="primary">hemA</name>
    <name type="ordered locus">TTHA1506</name>
</gene>
<proteinExistence type="inferred from homology"/>
<keyword id="KW-0521">NADP</keyword>
<keyword id="KW-0560">Oxidoreductase</keyword>
<keyword id="KW-0627">Porphyrin biosynthesis</keyword>
<keyword id="KW-1185">Reference proteome</keyword>
<accession>Q5SI68</accession>
<dbReference type="EC" id="1.2.1.70" evidence="1"/>
<dbReference type="EMBL" id="AP008226">
    <property type="protein sequence ID" value="BAD71329.1"/>
    <property type="molecule type" value="Genomic_DNA"/>
</dbReference>
<dbReference type="RefSeq" id="WP_011228725.1">
    <property type="nucleotide sequence ID" value="NC_006461.1"/>
</dbReference>
<dbReference type="RefSeq" id="YP_144772.1">
    <property type="nucleotide sequence ID" value="NC_006461.1"/>
</dbReference>
<dbReference type="SMR" id="Q5SI68"/>
<dbReference type="EnsemblBacteria" id="BAD71329">
    <property type="protein sequence ID" value="BAD71329"/>
    <property type="gene ID" value="BAD71329"/>
</dbReference>
<dbReference type="GeneID" id="3168904"/>
<dbReference type="KEGG" id="ttj:TTHA1506"/>
<dbReference type="PATRIC" id="fig|300852.9.peg.1481"/>
<dbReference type="eggNOG" id="COG0373">
    <property type="taxonomic scope" value="Bacteria"/>
</dbReference>
<dbReference type="HOGENOM" id="CLU_035113_1_0_0"/>
<dbReference type="PhylomeDB" id="Q5SI68"/>
<dbReference type="UniPathway" id="UPA00251">
    <property type="reaction ID" value="UER00316"/>
</dbReference>
<dbReference type="Proteomes" id="UP000000532">
    <property type="component" value="Chromosome"/>
</dbReference>
<dbReference type="GO" id="GO:0008883">
    <property type="term" value="F:glutamyl-tRNA reductase activity"/>
    <property type="evidence" value="ECO:0007669"/>
    <property type="project" value="UniProtKB-UniRule"/>
</dbReference>
<dbReference type="GO" id="GO:0050661">
    <property type="term" value="F:NADP binding"/>
    <property type="evidence" value="ECO:0007669"/>
    <property type="project" value="InterPro"/>
</dbReference>
<dbReference type="GO" id="GO:0019353">
    <property type="term" value="P:protoporphyrinogen IX biosynthetic process from glutamate"/>
    <property type="evidence" value="ECO:0007669"/>
    <property type="project" value="TreeGrafter"/>
</dbReference>
<dbReference type="CDD" id="cd05213">
    <property type="entry name" value="NAD_bind_Glutamyl_tRNA_reduct"/>
    <property type="match status" value="1"/>
</dbReference>
<dbReference type="FunFam" id="3.30.460.30:FF:000001">
    <property type="entry name" value="Glutamyl-tRNA reductase"/>
    <property type="match status" value="1"/>
</dbReference>
<dbReference type="FunFam" id="3.40.50.720:FF:000031">
    <property type="entry name" value="Glutamyl-tRNA reductase"/>
    <property type="match status" value="1"/>
</dbReference>
<dbReference type="Gene3D" id="3.30.460.30">
    <property type="entry name" value="Glutamyl-tRNA reductase, N-terminal domain"/>
    <property type="match status" value="1"/>
</dbReference>
<dbReference type="Gene3D" id="3.40.50.720">
    <property type="entry name" value="NAD(P)-binding Rossmann-like Domain"/>
    <property type="match status" value="1"/>
</dbReference>
<dbReference type="HAMAP" id="MF_00087">
    <property type="entry name" value="Glu_tRNA_reductase"/>
    <property type="match status" value="1"/>
</dbReference>
<dbReference type="InterPro" id="IPR000343">
    <property type="entry name" value="4pyrrol_synth_GluRdtase"/>
</dbReference>
<dbReference type="InterPro" id="IPR015895">
    <property type="entry name" value="4pyrrol_synth_GluRdtase_N"/>
</dbReference>
<dbReference type="InterPro" id="IPR018214">
    <property type="entry name" value="GluRdtase_CS"/>
</dbReference>
<dbReference type="InterPro" id="IPR036343">
    <property type="entry name" value="GluRdtase_N_sf"/>
</dbReference>
<dbReference type="InterPro" id="IPR036291">
    <property type="entry name" value="NAD(P)-bd_dom_sf"/>
</dbReference>
<dbReference type="InterPro" id="IPR006151">
    <property type="entry name" value="Shikm_DH/Glu-tRNA_Rdtase"/>
</dbReference>
<dbReference type="NCBIfam" id="TIGR01035">
    <property type="entry name" value="hemA"/>
    <property type="match status" value="1"/>
</dbReference>
<dbReference type="PANTHER" id="PTHR43013">
    <property type="entry name" value="GLUTAMYL-TRNA REDUCTASE"/>
    <property type="match status" value="1"/>
</dbReference>
<dbReference type="PANTHER" id="PTHR43013:SF1">
    <property type="entry name" value="GLUTAMYL-TRNA REDUCTASE"/>
    <property type="match status" value="1"/>
</dbReference>
<dbReference type="Pfam" id="PF05201">
    <property type="entry name" value="GlutR_N"/>
    <property type="match status" value="1"/>
</dbReference>
<dbReference type="Pfam" id="PF01488">
    <property type="entry name" value="Shikimate_DH"/>
    <property type="match status" value="1"/>
</dbReference>
<dbReference type="PIRSF" id="PIRSF000445">
    <property type="entry name" value="4pyrrol_synth_GluRdtase"/>
    <property type="match status" value="1"/>
</dbReference>
<dbReference type="SUPFAM" id="SSF69742">
    <property type="entry name" value="Glutamyl tRNA-reductase catalytic, N-terminal domain"/>
    <property type="match status" value="1"/>
</dbReference>
<dbReference type="SUPFAM" id="SSF51735">
    <property type="entry name" value="NAD(P)-binding Rossmann-fold domains"/>
    <property type="match status" value="1"/>
</dbReference>
<dbReference type="PROSITE" id="PS00747">
    <property type="entry name" value="GLUTR"/>
    <property type="match status" value="1"/>
</dbReference>
<name>HEM1_THET8</name>
<evidence type="ECO:0000255" key="1">
    <source>
        <dbReference type="HAMAP-Rule" id="MF_00087"/>
    </source>
</evidence>
<comment type="function">
    <text evidence="1">Catalyzes the NADPH-dependent reduction of glutamyl-tRNA(Glu) to glutamate 1-semialdehyde (GSA).</text>
</comment>
<comment type="catalytic activity">
    <reaction evidence="1">
        <text>(S)-4-amino-5-oxopentanoate + tRNA(Glu) + NADP(+) = L-glutamyl-tRNA(Glu) + NADPH + H(+)</text>
        <dbReference type="Rhea" id="RHEA:12344"/>
        <dbReference type="Rhea" id="RHEA-COMP:9663"/>
        <dbReference type="Rhea" id="RHEA-COMP:9680"/>
        <dbReference type="ChEBI" id="CHEBI:15378"/>
        <dbReference type="ChEBI" id="CHEBI:57501"/>
        <dbReference type="ChEBI" id="CHEBI:57783"/>
        <dbReference type="ChEBI" id="CHEBI:58349"/>
        <dbReference type="ChEBI" id="CHEBI:78442"/>
        <dbReference type="ChEBI" id="CHEBI:78520"/>
        <dbReference type="EC" id="1.2.1.70"/>
    </reaction>
</comment>
<comment type="pathway">
    <text evidence="1">Porphyrin-containing compound metabolism; protoporphyrin-IX biosynthesis; 5-aminolevulinate from L-glutamyl-tRNA(Glu): step 1/2.</text>
</comment>
<comment type="subunit">
    <text evidence="1">Homodimer.</text>
</comment>
<comment type="domain">
    <text evidence="1">Possesses an unusual extended V-shaped dimeric structure with each monomer consisting of three distinct domains arranged along a curved 'spinal' alpha-helix. The N-terminal catalytic domain specifically recognizes the glutamate moiety of the substrate. The second domain is the NADPH-binding domain, and the third C-terminal domain is responsible for dimerization.</text>
</comment>
<comment type="miscellaneous">
    <text evidence="1">During catalysis, the active site Cys acts as a nucleophile attacking the alpha-carbonyl group of tRNA-bound glutamate with the formation of a thioester intermediate between enzyme and glutamate, and the concomitant release of tRNA(Glu). The thioester intermediate is finally reduced by direct hydride transfer from NADPH, to form the product GSA.</text>
</comment>
<comment type="similarity">
    <text evidence="1">Belongs to the glutamyl-tRNA reductase family.</text>
</comment>
<sequence>MALPLYLVGLSHKTAPLEVRERAALDPVVALPAALSALGKGVVLSTCNRTELYGVGSPEKARAFLLSRGVAPRHLYVKEGVEALRHLYRVAAGLDSLVVGEAQILGQVREALFLARRQGATESLLEKAFQSAIALGKRARSETGIGMGAVSVAYAALDLALAVYGDLSGLSVAVLGAGEMAELFLTHLKAHGVGRILVVNRTEEKAQALAERFGGEAFGLPALPQVLRQADLVVASAAAPHYLVGPEDLPKRAKPLFLIDIALPRNIDPRVGDLPHAYLYNLDDLKRVVDRNLRARAGEIPKVEALIEKALGDYMEWYAGHRVREAIRALEAWARVQAAKAQPEAGPVELEKAAGRLAHPFILGLKRRALDRVGGPPCPEDCLLYRLSRT</sequence>
<reference key="1">
    <citation type="submission" date="2004-11" db="EMBL/GenBank/DDBJ databases">
        <title>Complete genome sequence of Thermus thermophilus HB8.</title>
        <authorList>
            <person name="Masui R."/>
            <person name="Kurokawa K."/>
            <person name="Nakagawa N."/>
            <person name="Tokunaga F."/>
            <person name="Koyama Y."/>
            <person name="Shibata T."/>
            <person name="Oshima T."/>
            <person name="Yokoyama S."/>
            <person name="Yasunaga T."/>
            <person name="Kuramitsu S."/>
        </authorList>
    </citation>
    <scope>NUCLEOTIDE SEQUENCE [LARGE SCALE GENOMIC DNA]</scope>
    <source>
        <strain>ATCC 27634 / DSM 579 / HB8</strain>
    </source>
</reference>
<feature type="chain" id="PRO_1000004717" description="Glutamyl-tRNA reductase">
    <location>
        <begin position="1"/>
        <end position="390"/>
    </location>
</feature>
<feature type="active site" description="Nucleophile" evidence="1">
    <location>
        <position position="47"/>
    </location>
</feature>
<feature type="binding site" evidence="1">
    <location>
        <begin position="46"/>
        <end position="49"/>
    </location>
    <ligand>
        <name>substrate</name>
    </ligand>
</feature>
<feature type="binding site" evidence="1">
    <location>
        <position position="96"/>
    </location>
    <ligand>
        <name>substrate</name>
    </ligand>
</feature>
<feature type="binding site" evidence="1">
    <location>
        <begin position="101"/>
        <end position="103"/>
    </location>
    <ligand>
        <name>substrate</name>
    </ligand>
</feature>
<feature type="binding site" evidence="1">
    <location>
        <position position="107"/>
    </location>
    <ligand>
        <name>substrate</name>
    </ligand>
</feature>
<feature type="binding site" evidence="1">
    <location>
        <begin position="176"/>
        <end position="181"/>
    </location>
    <ligand>
        <name>NADP(+)</name>
        <dbReference type="ChEBI" id="CHEBI:58349"/>
    </ligand>
</feature>
<feature type="site" description="Important for activity" evidence="1">
    <location>
        <position position="86"/>
    </location>
</feature>
<protein>
    <recommendedName>
        <fullName evidence="1">Glutamyl-tRNA reductase</fullName>
        <shortName evidence="1">GluTR</shortName>
        <ecNumber evidence="1">1.2.1.70</ecNumber>
    </recommendedName>
</protein>